<comment type="function">
    <text evidence="1 2">Possesses DNA- and RNA-binding activities (PubMed:22167473). Binds to DNA fragments longer than 14 base pairs with relaxed sequence specificity (PubMed:22167473). Associates with the subtelomeric TARE6 repeats (PubMed:22167473). Regulates the abundance of transcript sub-populations in a stage-specific manner (By similarity). Regulates activation of male gametocytes (By similarity). Participates in the coordination of sporozoite development in the oocyst (By similarity).</text>
</comment>
<comment type="subunit">
    <text evidence="2">Identified in a TARE6-associated complex consisting of over 30 proteins and including ALBA1, ALBA2 and ALBA4; the complex binds to the non-coding subtelomeric repeat region TARE6.</text>
</comment>
<comment type="subcellular location">
    <subcellularLocation>
        <location evidence="2">Nucleus</location>
    </subcellularLocation>
    <subcellularLocation>
        <location evidence="2">Chromosome</location>
        <location evidence="2">Telomere</location>
    </subcellularLocation>
    <subcellularLocation>
        <location evidence="2">Cytoplasm</location>
    </subcellularLocation>
    <text evidence="2">Localizes to the nucleus in the ring stages and expands to punctate loci in the cytoplasm during the trophozoite and schizont stages.</text>
</comment>
<comment type="developmental stage">
    <text evidence="2">Expressed throughout asexual blood stage development and in the developing merozoites (at protein level).</text>
</comment>
<comment type="similarity">
    <text evidence="4">Belongs to the histone-like Alba family.</text>
</comment>
<protein>
    <recommendedName>
        <fullName evidence="4">DNA/RNA-binding protein ALBA4</fullName>
        <shortName evidence="3">PfAlba4</shortName>
    </recommendedName>
</protein>
<sequence length="372" mass="42160">MENDKKHNQKQNNVDENEFPNSKVLLVSVKRTRRFLERTARELLAGGTRYIILSGLGDALPLCVQLQSSLQSKNAANVVKIETSYSYFNSNYSYTPGLKIYMEKHPEFKGSRISPGYVSFHEKTDSFTPIYDENPNEYICSLNAGDNNLYVGGEGINGAFSELLSSHNQEVDKYESLFKELLTKAVNENGEKPDEEVKSVLYDNVDKKYPDVKLALCRIRNSLKKGSDHSTGSVFIVTFKKNFPHKKEKNMGMVYVVGPKGKNYNSVEEFLDEVQETAENLMTTLCDYNGLVKREEIKHVRMNTCRICLFSGSIFKHPNASKLDVAKAILNGLAVGYRHGPSPRLNFAYDENVFKDAWVETTGLQVFNHNEQ</sequence>
<reference evidence="6" key="1">
    <citation type="journal article" date="2002" name="Nature">
        <title>Genome sequence of the human malaria parasite Plasmodium falciparum.</title>
        <authorList>
            <person name="Gardner M.J."/>
            <person name="Hall N."/>
            <person name="Fung E."/>
            <person name="White O."/>
            <person name="Berriman M."/>
            <person name="Hyman R.W."/>
            <person name="Carlton J.M."/>
            <person name="Pain A."/>
            <person name="Nelson K.E."/>
            <person name="Bowman S."/>
            <person name="Paulsen I.T."/>
            <person name="James K.D."/>
            <person name="Eisen J.A."/>
            <person name="Rutherford K.M."/>
            <person name="Salzberg S.L."/>
            <person name="Craig A."/>
            <person name="Kyes S."/>
            <person name="Chan M.-S."/>
            <person name="Nene V."/>
            <person name="Shallom S.J."/>
            <person name="Suh B."/>
            <person name="Peterson J."/>
            <person name="Angiuoli S."/>
            <person name="Pertea M."/>
            <person name="Allen J."/>
            <person name="Selengut J."/>
            <person name="Haft D."/>
            <person name="Mather M.W."/>
            <person name="Vaidya A.B."/>
            <person name="Martin D.M.A."/>
            <person name="Fairlamb A.H."/>
            <person name="Fraunholz M.J."/>
            <person name="Roos D.S."/>
            <person name="Ralph S.A."/>
            <person name="McFadden G.I."/>
            <person name="Cummings L.M."/>
            <person name="Subramanian G.M."/>
            <person name="Mungall C."/>
            <person name="Venter J.C."/>
            <person name="Carucci D.J."/>
            <person name="Hoffman S.L."/>
            <person name="Newbold C."/>
            <person name="Davis R.W."/>
            <person name="Fraser C.M."/>
            <person name="Barrell B.G."/>
        </authorList>
    </citation>
    <scope>NUCLEOTIDE SEQUENCE [LARGE SCALE GENOMIC DNA]</scope>
    <source>
        <strain evidence="6">3D7</strain>
    </source>
</reference>
<reference evidence="6" key="2">
    <citation type="journal article" date="2002" name="Nature">
        <title>Sequence of Plasmodium falciparum chromosomes 1, 3-9 and 13.</title>
        <authorList>
            <person name="Hall N."/>
            <person name="Pain A."/>
            <person name="Berriman M."/>
            <person name="Churcher C.M."/>
            <person name="Harris B."/>
            <person name="Harris D."/>
            <person name="Mungall K.L."/>
            <person name="Bowman S."/>
            <person name="Atkin R."/>
            <person name="Baker S."/>
            <person name="Barron A."/>
            <person name="Brooks K."/>
            <person name="Buckee C.O."/>
            <person name="Burrows C."/>
            <person name="Cherevach I."/>
            <person name="Chillingworth C."/>
            <person name="Chillingworth T."/>
            <person name="Christodoulou Z."/>
            <person name="Clark L."/>
            <person name="Clark R."/>
            <person name="Corton C."/>
            <person name="Cronin A."/>
            <person name="Davies R.M."/>
            <person name="Davis P."/>
            <person name="Dear P."/>
            <person name="Dearden F."/>
            <person name="Doggett J."/>
            <person name="Feltwell T."/>
            <person name="Goble A."/>
            <person name="Goodhead I."/>
            <person name="Gwilliam R."/>
            <person name="Hamlin N."/>
            <person name="Hance Z."/>
            <person name="Harper D."/>
            <person name="Hauser H."/>
            <person name="Hornsby T."/>
            <person name="Holroyd S."/>
            <person name="Horrocks P."/>
            <person name="Humphray S."/>
            <person name="Jagels K."/>
            <person name="James K.D."/>
            <person name="Johnson D."/>
            <person name="Kerhornou A."/>
            <person name="Knights A."/>
            <person name="Konfortov B."/>
            <person name="Kyes S."/>
            <person name="Larke N."/>
            <person name="Lawson D."/>
            <person name="Lennard N."/>
            <person name="Line A."/>
            <person name="Maddison M."/>
            <person name="Mclean J."/>
            <person name="Mooney P."/>
            <person name="Moule S."/>
            <person name="Murphy L."/>
            <person name="Oliver K."/>
            <person name="Ormond D."/>
            <person name="Price C."/>
            <person name="Quail M.A."/>
            <person name="Rabbinowitsch E."/>
            <person name="Rajandream M.A."/>
            <person name="Rutter S."/>
            <person name="Rutherford K.M."/>
            <person name="Sanders M."/>
            <person name="Simmonds M."/>
            <person name="Seeger K."/>
            <person name="Sharp S."/>
            <person name="Smith R."/>
            <person name="Squares R."/>
            <person name="Squares S."/>
            <person name="Stevens K."/>
            <person name="Taylor K."/>
            <person name="Tivey A."/>
            <person name="Unwin L."/>
            <person name="Whitehead S."/>
            <person name="Woodward J.R."/>
            <person name="Sulston J.E."/>
            <person name="Craig A."/>
            <person name="Newbold C."/>
            <person name="Barrell B.G."/>
        </authorList>
    </citation>
    <scope>NUCLEOTIDE SEQUENCE [LARGE SCALE GENOMIC DNA]</scope>
    <source>
        <strain evidence="6">3D7</strain>
    </source>
</reference>
<reference evidence="4" key="3">
    <citation type="journal article" date="2012" name="Nucleic Acids Res.">
        <title>PfAlbas constitute a new eukaryotic DNA/RNA-binding protein family in malaria parasites.</title>
        <authorList>
            <person name="Chene A."/>
            <person name="Vembar S.S."/>
            <person name="Riviere L."/>
            <person name="Lopez-Rubio J.J."/>
            <person name="Claes A."/>
            <person name="Siegel T.N."/>
            <person name="Sakamoto H."/>
            <person name="Scheidig-Benatar C."/>
            <person name="Hernandez-Rivas R."/>
            <person name="Scherf A."/>
        </authorList>
    </citation>
    <scope>IDENTIFICATION BY MASS SPECTROMETRY</scope>
    <scope>FUNCTION</scope>
    <scope>SUBUNIT</scope>
    <scope>IDENTIFICATION IN THE TARE6-ASSOCIATED COMPLEX</scope>
    <scope>SUBCELLULAR LOCATION</scope>
    <scope>DEVELOPMENTAL STAGE</scope>
</reference>
<keyword id="KW-0158">Chromosome</keyword>
<keyword id="KW-0963">Cytoplasm</keyword>
<keyword id="KW-0238">DNA-binding</keyword>
<keyword id="KW-0539">Nucleus</keyword>
<keyword id="KW-1185">Reference proteome</keyword>
<keyword id="KW-0694">RNA-binding</keyword>
<keyword id="KW-0779">Telomere</keyword>
<proteinExistence type="evidence at protein level"/>
<name>ALBA4_PLAF7</name>
<organism evidence="6">
    <name type="scientific">Plasmodium falciparum (isolate 3D7)</name>
    <dbReference type="NCBI Taxonomy" id="36329"/>
    <lineage>
        <taxon>Eukaryota</taxon>
        <taxon>Sar</taxon>
        <taxon>Alveolata</taxon>
        <taxon>Apicomplexa</taxon>
        <taxon>Aconoidasida</taxon>
        <taxon>Haemosporida</taxon>
        <taxon>Plasmodiidae</taxon>
        <taxon>Plasmodium</taxon>
        <taxon>Plasmodium (Laverania)</taxon>
    </lineage>
</organism>
<feature type="chain" id="PRO_0000459508" description="DNA/RNA-binding protein ALBA4">
    <location>
        <begin position="1"/>
        <end position="372"/>
    </location>
</feature>
<gene>
    <name evidence="4" type="primary">ALBA4</name>
    <name evidence="5" type="ORF">PF3D7_1347500</name>
</gene>
<accession>A0A5K1K8Y8</accession>
<evidence type="ECO:0000250" key="1">
    <source>
        <dbReference type="UniProtKB" id="A0A077YAQ2"/>
    </source>
</evidence>
<evidence type="ECO:0000269" key="2">
    <source>
    </source>
</evidence>
<evidence type="ECO:0000303" key="3">
    <source>
    </source>
</evidence>
<evidence type="ECO:0000305" key="4"/>
<evidence type="ECO:0000312" key="5">
    <source>
        <dbReference type="EMBL" id="VWP77788.1"/>
    </source>
</evidence>
<evidence type="ECO:0000312" key="6">
    <source>
        <dbReference type="Proteomes" id="UP000001450"/>
    </source>
</evidence>
<dbReference type="EMBL" id="AL844509">
    <property type="protein sequence ID" value="VWP77788.1"/>
    <property type="molecule type" value="Genomic_DNA"/>
</dbReference>
<dbReference type="RefSeq" id="XP_001350189.1">
    <property type="nucleotide sequence ID" value="XM_001350153.1"/>
</dbReference>
<dbReference type="SMR" id="A0A5K1K8Y8"/>
<dbReference type="FunCoup" id="A0A5K1K8Y8">
    <property type="interactions" value="19"/>
</dbReference>
<dbReference type="IntAct" id="A0A5K1K8Y8">
    <property type="interactions" value="3"/>
</dbReference>
<dbReference type="PaxDb" id="5833-MAL13P1.237"/>
<dbReference type="GeneID" id="813796"/>
<dbReference type="KEGG" id="pfa:PF3D7_1347500"/>
<dbReference type="VEuPathDB" id="PlasmoDB:PF3D7_1347500"/>
<dbReference type="InParanoid" id="A0A5K1K8Y8"/>
<dbReference type="OMA" id="YICSVNA"/>
<dbReference type="OrthoDB" id="447602at2759"/>
<dbReference type="Proteomes" id="UP000001450">
    <property type="component" value="Chromosome 13"/>
</dbReference>
<dbReference type="GO" id="GO:0000781">
    <property type="term" value="C:chromosome, telomeric region"/>
    <property type="evidence" value="ECO:0007669"/>
    <property type="project" value="UniProtKB-SubCell"/>
</dbReference>
<dbReference type="GO" id="GO:0005737">
    <property type="term" value="C:cytoplasm"/>
    <property type="evidence" value="ECO:0007669"/>
    <property type="project" value="UniProtKB-SubCell"/>
</dbReference>
<dbReference type="GO" id="GO:0005634">
    <property type="term" value="C:nucleus"/>
    <property type="evidence" value="ECO:0007669"/>
    <property type="project" value="UniProtKB-SubCell"/>
</dbReference>
<dbReference type="GO" id="GO:0003677">
    <property type="term" value="F:DNA binding"/>
    <property type="evidence" value="ECO:0007669"/>
    <property type="project" value="UniProtKB-KW"/>
</dbReference>
<dbReference type="GO" id="GO:0003723">
    <property type="term" value="F:RNA binding"/>
    <property type="evidence" value="ECO:0007669"/>
    <property type="project" value="UniProtKB-KW"/>
</dbReference>
<dbReference type="CDD" id="cd21101">
    <property type="entry name" value="MAF1-ALBA4_C"/>
    <property type="match status" value="1"/>
</dbReference>
<dbReference type="InterPro" id="IPR036882">
    <property type="entry name" value="Alba-like_dom_sf"/>
</dbReference>
<dbReference type="SUPFAM" id="SSF82704">
    <property type="entry name" value="AlbA-like"/>
    <property type="match status" value="1"/>
</dbReference>